<proteinExistence type="inferred from homology"/>
<protein>
    <recommendedName>
        <fullName evidence="1">Crossover junction endodeoxyribonuclease RuvC</fullName>
        <ecNumber evidence="1">3.1.21.10</ecNumber>
    </recommendedName>
    <alternativeName>
        <fullName evidence="1">Holliday junction nuclease RuvC</fullName>
    </alternativeName>
    <alternativeName>
        <fullName evidence="1">Holliday junction resolvase RuvC</fullName>
    </alternativeName>
</protein>
<sequence>MIILGIDPGLSLTGWGVVEAFSRDKVNPLQYGCIKTMPSVPLIQRLQTINTKLQSVIDKYKPEVASIEELFFFKATKSIAAVGQTRGAIILTASLNKIPLFEYNPKSVKTALTGYGSADKYQMQRIVKTFLRLKEIPKPDDAADALAIAVCHVNTINWNANNNNNASVFLKNKVFKESAKPNLLKKLFSL</sequence>
<gene>
    <name evidence="1" type="primary">ruvC</name>
    <name type="ordered locus">TGRD_461</name>
</gene>
<comment type="function">
    <text evidence="1">The RuvA-RuvB-RuvC complex processes Holliday junction (HJ) DNA during genetic recombination and DNA repair. Endonuclease that resolves HJ intermediates. Cleaves cruciform DNA by making single-stranded nicks across the HJ at symmetrical positions within the homologous arms, yielding a 5'-phosphate and a 3'-hydroxyl group; requires a central core of homology in the junction. The consensus cleavage sequence is 5'-(A/T)TT(C/G)-3'. Cleavage occurs on the 3'-side of the TT dinucleotide at the point of strand exchange. HJ branch migration catalyzed by RuvA-RuvB allows RuvC to scan DNA until it finds its consensus sequence, where it cleaves and resolves the cruciform DNA.</text>
</comment>
<comment type="catalytic activity">
    <reaction evidence="1">
        <text>Endonucleolytic cleavage at a junction such as a reciprocal single-stranded crossover between two homologous DNA duplexes (Holliday junction).</text>
        <dbReference type="EC" id="3.1.21.10"/>
    </reaction>
</comment>
<comment type="cofactor">
    <cofactor evidence="1">
        <name>Mg(2+)</name>
        <dbReference type="ChEBI" id="CHEBI:18420"/>
    </cofactor>
    <text evidence="1">Binds 2 Mg(2+) ion per subunit.</text>
</comment>
<comment type="subunit">
    <text evidence="1">Homodimer which binds Holliday junction (HJ) DNA. The HJ becomes 2-fold symmetrical on binding to RuvC with unstacked arms; it has a different conformation from HJ DNA in complex with RuvA. In the full resolvosome a probable DNA-RuvA(4)-RuvB(12)-RuvC(2) complex forms which resolves the HJ.</text>
</comment>
<comment type="subcellular location">
    <subcellularLocation>
        <location evidence="1">Cytoplasm</location>
    </subcellularLocation>
</comment>
<comment type="similarity">
    <text evidence="1">Belongs to the RuvC family.</text>
</comment>
<dbReference type="EC" id="3.1.21.10" evidence="1"/>
<dbReference type="EMBL" id="AP009510">
    <property type="protein sequence ID" value="BAG13944.1"/>
    <property type="molecule type" value="Genomic_DNA"/>
</dbReference>
<dbReference type="RefSeq" id="WP_015423470.1">
    <property type="nucleotide sequence ID" value="NC_020419.1"/>
</dbReference>
<dbReference type="SMR" id="B1H0B2"/>
<dbReference type="STRING" id="471821.TGRD_461"/>
<dbReference type="KEGG" id="eti:RSTT_399"/>
<dbReference type="KEGG" id="rsd:TGRD_461"/>
<dbReference type="PATRIC" id="fig|471821.5.peg.748"/>
<dbReference type="HOGENOM" id="CLU_091257_3_1_0"/>
<dbReference type="OrthoDB" id="9805499at2"/>
<dbReference type="Proteomes" id="UP000001691">
    <property type="component" value="Chromosome"/>
</dbReference>
<dbReference type="GO" id="GO:0005737">
    <property type="term" value="C:cytoplasm"/>
    <property type="evidence" value="ECO:0007669"/>
    <property type="project" value="UniProtKB-SubCell"/>
</dbReference>
<dbReference type="GO" id="GO:0048476">
    <property type="term" value="C:Holliday junction resolvase complex"/>
    <property type="evidence" value="ECO:0007669"/>
    <property type="project" value="UniProtKB-UniRule"/>
</dbReference>
<dbReference type="GO" id="GO:0008821">
    <property type="term" value="F:crossover junction DNA endonuclease activity"/>
    <property type="evidence" value="ECO:0007669"/>
    <property type="project" value="UniProtKB-UniRule"/>
</dbReference>
<dbReference type="GO" id="GO:0003677">
    <property type="term" value="F:DNA binding"/>
    <property type="evidence" value="ECO:0007669"/>
    <property type="project" value="UniProtKB-KW"/>
</dbReference>
<dbReference type="GO" id="GO:0000287">
    <property type="term" value="F:magnesium ion binding"/>
    <property type="evidence" value="ECO:0007669"/>
    <property type="project" value="UniProtKB-UniRule"/>
</dbReference>
<dbReference type="GO" id="GO:0006310">
    <property type="term" value="P:DNA recombination"/>
    <property type="evidence" value="ECO:0007669"/>
    <property type="project" value="UniProtKB-UniRule"/>
</dbReference>
<dbReference type="GO" id="GO:0006281">
    <property type="term" value="P:DNA repair"/>
    <property type="evidence" value="ECO:0007669"/>
    <property type="project" value="UniProtKB-UniRule"/>
</dbReference>
<dbReference type="CDD" id="cd16962">
    <property type="entry name" value="RuvC"/>
    <property type="match status" value="1"/>
</dbReference>
<dbReference type="FunFam" id="3.30.420.10:FF:000002">
    <property type="entry name" value="Crossover junction endodeoxyribonuclease RuvC"/>
    <property type="match status" value="1"/>
</dbReference>
<dbReference type="Gene3D" id="3.30.420.10">
    <property type="entry name" value="Ribonuclease H-like superfamily/Ribonuclease H"/>
    <property type="match status" value="1"/>
</dbReference>
<dbReference type="HAMAP" id="MF_00034">
    <property type="entry name" value="RuvC"/>
    <property type="match status" value="1"/>
</dbReference>
<dbReference type="InterPro" id="IPR012337">
    <property type="entry name" value="RNaseH-like_sf"/>
</dbReference>
<dbReference type="InterPro" id="IPR036397">
    <property type="entry name" value="RNaseH_sf"/>
</dbReference>
<dbReference type="InterPro" id="IPR020563">
    <property type="entry name" value="X-over_junc_endoDNase_Mg_BS"/>
</dbReference>
<dbReference type="InterPro" id="IPR002176">
    <property type="entry name" value="X-over_junc_endoDNase_RuvC"/>
</dbReference>
<dbReference type="NCBIfam" id="NF000711">
    <property type="entry name" value="PRK00039.2-1"/>
    <property type="match status" value="1"/>
</dbReference>
<dbReference type="NCBIfam" id="TIGR00228">
    <property type="entry name" value="ruvC"/>
    <property type="match status" value="1"/>
</dbReference>
<dbReference type="PANTHER" id="PTHR30194">
    <property type="entry name" value="CROSSOVER JUNCTION ENDODEOXYRIBONUCLEASE RUVC"/>
    <property type="match status" value="1"/>
</dbReference>
<dbReference type="PANTHER" id="PTHR30194:SF3">
    <property type="entry name" value="CROSSOVER JUNCTION ENDODEOXYRIBONUCLEASE RUVC"/>
    <property type="match status" value="1"/>
</dbReference>
<dbReference type="Pfam" id="PF02075">
    <property type="entry name" value="RuvC"/>
    <property type="match status" value="1"/>
</dbReference>
<dbReference type="PRINTS" id="PR00696">
    <property type="entry name" value="RSOLVASERUVC"/>
</dbReference>
<dbReference type="SUPFAM" id="SSF53098">
    <property type="entry name" value="Ribonuclease H-like"/>
    <property type="match status" value="1"/>
</dbReference>
<dbReference type="PROSITE" id="PS01321">
    <property type="entry name" value="RUVC"/>
    <property type="match status" value="1"/>
</dbReference>
<reference key="1">
    <citation type="journal article" date="2008" name="Proc. Natl. Acad. Sci. U.S.A.">
        <title>Complete genome of the uncultured termite group 1 bacteria in a single host protist cell.</title>
        <authorList>
            <person name="Hongoh Y."/>
            <person name="Sharma V.K."/>
            <person name="Prakash T."/>
            <person name="Noda S."/>
            <person name="Taylor T.D."/>
            <person name="Kudo T."/>
            <person name="Sakaki Y."/>
            <person name="Toyoda A."/>
            <person name="Hattori M."/>
            <person name="Ohkuma M."/>
        </authorList>
    </citation>
    <scope>NUCLEOTIDE SEQUENCE [LARGE SCALE GENOMIC DNA]</scope>
</reference>
<organism>
    <name type="scientific">Endomicrobium trichonymphae</name>
    <dbReference type="NCBI Taxonomy" id="1408204"/>
    <lineage>
        <taxon>Bacteria</taxon>
        <taxon>Pseudomonadati</taxon>
        <taxon>Elusimicrobiota</taxon>
        <taxon>Endomicrobiia</taxon>
        <taxon>Endomicrobiales</taxon>
        <taxon>Endomicrobiaceae</taxon>
        <taxon>Candidatus Endomicrobiellum</taxon>
    </lineage>
</organism>
<evidence type="ECO:0000255" key="1">
    <source>
        <dbReference type="HAMAP-Rule" id="MF_00034"/>
    </source>
</evidence>
<name>RUVC_ENDTX</name>
<keyword id="KW-0963">Cytoplasm</keyword>
<keyword id="KW-0227">DNA damage</keyword>
<keyword id="KW-0233">DNA recombination</keyword>
<keyword id="KW-0234">DNA repair</keyword>
<keyword id="KW-0238">DNA-binding</keyword>
<keyword id="KW-0255">Endonuclease</keyword>
<keyword id="KW-0378">Hydrolase</keyword>
<keyword id="KW-0460">Magnesium</keyword>
<keyword id="KW-0479">Metal-binding</keyword>
<keyword id="KW-0540">Nuclease</keyword>
<accession>B1H0B2</accession>
<feature type="chain" id="PRO_1000090571" description="Crossover junction endodeoxyribonuclease RuvC">
    <location>
        <begin position="1"/>
        <end position="190"/>
    </location>
</feature>
<feature type="active site" evidence="1">
    <location>
        <position position="7"/>
    </location>
</feature>
<feature type="active site" evidence="1">
    <location>
        <position position="68"/>
    </location>
</feature>
<feature type="active site" evidence="1">
    <location>
        <position position="141"/>
    </location>
</feature>
<feature type="binding site" evidence="1">
    <location>
        <position position="7"/>
    </location>
    <ligand>
        <name>Mg(2+)</name>
        <dbReference type="ChEBI" id="CHEBI:18420"/>
        <label>1</label>
    </ligand>
</feature>
<feature type="binding site" evidence="1">
    <location>
        <position position="68"/>
    </location>
    <ligand>
        <name>Mg(2+)</name>
        <dbReference type="ChEBI" id="CHEBI:18420"/>
        <label>2</label>
    </ligand>
</feature>
<feature type="binding site" evidence="1">
    <location>
        <position position="141"/>
    </location>
    <ligand>
        <name>Mg(2+)</name>
        <dbReference type="ChEBI" id="CHEBI:18420"/>
        <label>1</label>
    </ligand>
</feature>